<keyword id="KW-0966">Cell projection</keyword>
<keyword id="KW-0970">Cilium biogenesis/degradation</keyword>
<keyword id="KW-0963">Cytoplasm</keyword>
<keyword id="KW-0206">Cytoskeleton</keyword>
<keyword id="KW-0597">Phosphoprotein</keyword>
<keyword id="KW-1185">Reference proteome</keyword>
<evidence type="ECO:0000250" key="1"/>
<evidence type="ECO:0000250" key="2">
    <source>
        <dbReference type="UniProtKB" id="Q96NB1"/>
    </source>
</evidence>
<evidence type="ECO:0000255" key="3">
    <source>
        <dbReference type="PROSITE-ProRule" id="PRU00126"/>
    </source>
</evidence>
<evidence type="ECO:0000256" key="4">
    <source>
        <dbReference type="SAM" id="MobiDB-lite"/>
    </source>
</evidence>
<evidence type="ECO:0000269" key="5">
    <source>
    </source>
</evidence>
<evidence type="ECO:0000269" key="6">
    <source>
    </source>
</evidence>
<evidence type="ECO:0000303" key="7">
    <source>
    </source>
</evidence>
<evidence type="ECO:0000305" key="8"/>
<evidence type="ECO:0000312" key="9">
    <source>
        <dbReference type="MGI" id="MGI:1913336"/>
    </source>
</evidence>
<gene>
    <name evidence="9" type="primary">Cep20</name>
    <name evidence="9" type="synonym">Fopnl</name>
    <name evidence="7" type="synonym">For20</name>
</gene>
<comment type="function">
    <text evidence="2">Involved in the biogenesis of cilia (By similarity). Required for the recruitment of PLK1 to centrosomes and S phase progression (By similarity).</text>
</comment>
<comment type="subunit">
    <text evidence="2 6">Homooligomer; probably required for localization to centrosomes (By similarity). Forms a complex with KIAA0753/OFIP and OFD1; within this complex may stabilize the interaction between OFD1 and KIAA0753/OFIP (PubMed:26643951). Interacts with PCM1; this interaction may be mediated by KIAA0753/OFIP (PubMed:26643951).</text>
</comment>
<comment type="subcellular location">
    <subcellularLocation>
        <location evidence="2">Cytoplasm</location>
        <location evidence="2">Cytoskeleton</location>
        <location evidence="2">Microtubule organizing center</location>
        <location evidence="2">Centrosome</location>
        <location evidence="2">Centriole</location>
    </subcellularLocation>
    <subcellularLocation>
        <location evidence="5">Cell projection</location>
        <location evidence="5">Cilium</location>
    </subcellularLocation>
    <subcellularLocation>
        <location evidence="5">Cytoplasm</location>
        <location evidence="5">Cytoskeleton</location>
        <location evidence="5">Cilium basal body</location>
    </subcellularLocation>
    <subcellularLocation>
        <location evidence="1">Cytoplasm</location>
        <location evidence="1">Cytoskeleton</location>
        <location evidence="1">Microtubule organizing center</location>
        <location evidence="1">Centrosome</location>
    </subcellularLocation>
    <subcellularLocation>
        <location evidence="1">Cytoplasmic granule</location>
    </subcellularLocation>
    <subcellularLocation>
        <location evidence="2">Cytoplasm</location>
        <location evidence="2">Cytoskeleton</location>
        <location evidence="2">Microtubule organizing center</location>
        <location evidence="2">Centrosome</location>
        <location evidence="2">Centriolar satellite</location>
    </subcellularLocation>
    <text evidence="2">Localization to centrioles and pericentriolar satellites may be mediated by KIAA0753/OFIP.</text>
</comment>
<comment type="similarity">
    <text evidence="8">Belongs to the CEP43 family.</text>
</comment>
<organism>
    <name type="scientific">Mus musculus</name>
    <name type="common">Mouse</name>
    <dbReference type="NCBI Taxonomy" id="10090"/>
    <lineage>
        <taxon>Eukaryota</taxon>
        <taxon>Metazoa</taxon>
        <taxon>Chordata</taxon>
        <taxon>Craniata</taxon>
        <taxon>Vertebrata</taxon>
        <taxon>Euteleostomi</taxon>
        <taxon>Mammalia</taxon>
        <taxon>Eutheria</taxon>
        <taxon>Euarchontoglires</taxon>
        <taxon>Glires</taxon>
        <taxon>Rodentia</taxon>
        <taxon>Myomorpha</taxon>
        <taxon>Muroidea</taxon>
        <taxon>Muridae</taxon>
        <taxon>Murinae</taxon>
        <taxon>Mus</taxon>
        <taxon>Mus</taxon>
    </lineage>
</organism>
<sequence length="174" mass="19642">MATVTELKAVLKDTLEKRGVLGHLKARIRAEVFNALDDDREPRPSLSHENLLINELIREYLEFNKYKYTASVLIAESGQPVVPLDRQFLIRELNAFEESKDNSIPLLYGILAHFLRGPPDGAQNVLLTESTLHPATKHLSWKPSRRPDDDHVRKDTGPRTTTEELPAAAQAVSR</sequence>
<accession>Q9CZS3</accession>
<accession>Q3UIK2</accession>
<feature type="chain" id="PRO_0000264466" description="Centrosomal protein 20">
    <location>
        <begin position="1"/>
        <end position="174"/>
    </location>
</feature>
<feature type="domain" description="LisH" evidence="3">
    <location>
        <begin position="49"/>
        <end position="81"/>
    </location>
</feature>
<feature type="region of interest" description="Necessary and sufficient for homooligomerization and localization to centrosomes and pericentriolar satellites" evidence="1">
    <location>
        <begin position="1"/>
        <end position="104"/>
    </location>
</feature>
<feature type="region of interest" description="Disordered" evidence="4">
    <location>
        <begin position="136"/>
        <end position="174"/>
    </location>
</feature>
<feature type="compositionally biased region" description="Basic and acidic residues" evidence="4">
    <location>
        <begin position="145"/>
        <end position="157"/>
    </location>
</feature>
<feature type="modified residue" description="Phosphoserine" evidence="2">
    <location>
        <position position="144"/>
    </location>
</feature>
<feature type="sequence conflict" description="In Ref. 1; BAE27504." evidence="8" ref="1">
    <original>Q</original>
    <variation>R</variation>
    <location>
        <position position="87"/>
    </location>
</feature>
<dbReference type="EMBL" id="AK012206">
    <property type="protein sequence ID" value="BAB28098.1"/>
    <property type="molecule type" value="mRNA"/>
</dbReference>
<dbReference type="EMBL" id="AK146884">
    <property type="protein sequence ID" value="BAE27504.1"/>
    <property type="molecule type" value="mRNA"/>
</dbReference>
<dbReference type="EMBL" id="AK153894">
    <property type="protein sequence ID" value="BAE32240.1"/>
    <property type="molecule type" value="mRNA"/>
</dbReference>
<dbReference type="EMBL" id="BC011300">
    <property type="protein sequence ID" value="AAH11300.1"/>
    <property type="molecule type" value="mRNA"/>
</dbReference>
<dbReference type="CCDS" id="CCDS27973.1"/>
<dbReference type="RefSeq" id="NP_079621.1">
    <property type="nucleotide sequence ID" value="NM_025345.2"/>
</dbReference>
<dbReference type="SMR" id="Q9CZS3"/>
<dbReference type="BioGRID" id="211204">
    <property type="interactions" value="1"/>
</dbReference>
<dbReference type="FunCoup" id="Q9CZS3">
    <property type="interactions" value="1086"/>
</dbReference>
<dbReference type="STRING" id="10090.ENSMUSP00000023357"/>
<dbReference type="iPTMnet" id="Q9CZS3"/>
<dbReference type="PhosphoSitePlus" id="Q9CZS3"/>
<dbReference type="PaxDb" id="10090-ENSMUSP00000023357"/>
<dbReference type="PeptideAtlas" id="Q9CZS3"/>
<dbReference type="ProteomicsDB" id="267392"/>
<dbReference type="Pumba" id="Q9CZS3"/>
<dbReference type="Antibodypedia" id="51607">
    <property type="antibodies" value="45 antibodies from 11 providers"/>
</dbReference>
<dbReference type="DNASU" id="66086"/>
<dbReference type="Ensembl" id="ENSMUST00000023357.14">
    <property type="protein sequence ID" value="ENSMUSP00000023357.8"/>
    <property type="gene ID" value="ENSMUSG00000022677.16"/>
</dbReference>
<dbReference type="GeneID" id="66086"/>
<dbReference type="KEGG" id="mmu:66086"/>
<dbReference type="UCSC" id="uc007yhh.1">
    <property type="organism name" value="mouse"/>
</dbReference>
<dbReference type="AGR" id="MGI:1913336"/>
<dbReference type="CTD" id="123811"/>
<dbReference type="MGI" id="MGI:1913336">
    <property type="gene designation" value="Cep20"/>
</dbReference>
<dbReference type="VEuPathDB" id="HostDB:ENSMUSG00000022677"/>
<dbReference type="eggNOG" id="ENOG502S0C1">
    <property type="taxonomic scope" value="Eukaryota"/>
</dbReference>
<dbReference type="GeneTree" id="ENSGT00390000007773"/>
<dbReference type="HOGENOM" id="CLU_119108_1_0_1"/>
<dbReference type="InParanoid" id="Q9CZS3"/>
<dbReference type="OMA" id="EYLVFNR"/>
<dbReference type="OrthoDB" id="5970631at2759"/>
<dbReference type="PhylomeDB" id="Q9CZS3"/>
<dbReference type="TreeFam" id="TF328861"/>
<dbReference type="BioGRID-ORCS" id="66086">
    <property type="hits" value="3 hits in 77 CRISPR screens"/>
</dbReference>
<dbReference type="PRO" id="PR:Q9CZS3"/>
<dbReference type="Proteomes" id="UP000000589">
    <property type="component" value="Chromosome 16"/>
</dbReference>
<dbReference type="RNAct" id="Q9CZS3">
    <property type="molecule type" value="protein"/>
</dbReference>
<dbReference type="Bgee" id="ENSMUSG00000022677">
    <property type="expression patterns" value="Expressed in interventricular septum and 253 other cell types or tissues"/>
</dbReference>
<dbReference type="ExpressionAtlas" id="Q9CZS3">
    <property type="expression patterns" value="baseline and differential"/>
</dbReference>
<dbReference type="GO" id="GO:0034451">
    <property type="term" value="C:centriolar satellite"/>
    <property type="evidence" value="ECO:0000250"/>
    <property type="project" value="UniProtKB"/>
</dbReference>
<dbReference type="GO" id="GO:0005814">
    <property type="term" value="C:centriole"/>
    <property type="evidence" value="ECO:0007669"/>
    <property type="project" value="UniProtKB-SubCell"/>
</dbReference>
<dbReference type="GO" id="GO:0036064">
    <property type="term" value="C:ciliary basal body"/>
    <property type="evidence" value="ECO:0000314"/>
    <property type="project" value="UniProtKB"/>
</dbReference>
<dbReference type="GO" id="GO:0005737">
    <property type="term" value="C:cytoplasm"/>
    <property type="evidence" value="ECO:0007669"/>
    <property type="project" value="UniProtKB-KW"/>
</dbReference>
<dbReference type="GO" id="GO:0031514">
    <property type="term" value="C:motile cilium"/>
    <property type="evidence" value="ECO:0000314"/>
    <property type="project" value="UniProtKB"/>
</dbReference>
<dbReference type="GO" id="GO:0005654">
    <property type="term" value="C:nucleoplasm"/>
    <property type="evidence" value="ECO:0007669"/>
    <property type="project" value="Ensembl"/>
</dbReference>
<dbReference type="GO" id="GO:0042802">
    <property type="term" value="F:identical protein binding"/>
    <property type="evidence" value="ECO:0007669"/>
    <property type="project" value="Ensembl"/>
</dbReference>
<dbReference type="GO" id="GO:0060271">
    <property type="term" value="P:cilium assembly"/>
    <property type="evidence" value="ECO:0000250"/>
    <property type="project" value="UniProtKB"/>
</dbReference>
<dbReference type="GO" id="GO:0034453">
    <property type="term" value="P:microtubule anchoring"/>
    <property type="evidence" value="ECO:0007669"/>
    <property type="project" value="InterPro"/>
</dbReference>
<dbReference type="FunFam" id="1.20.960.40:FF:000002">
    <property type="entry name" value="LisH domain-containing protein FOPNL"/>
    <property type="match status" value="1"/>
</dbReference>
<dbReference type="Gene3D" id="1.20.960.40">
    <property type="match status" value="1"/>
</dbReference>
<dbReference type="InterPro" id="IPR018993">
    <property type="entry name" value="FOP_dimerisation-dom_N"/>
</dbReference>
<dbReference type="InterPro" id="IPR006594">
    <property type="entry name" value="LisH"/>
</dbReference>
<dbReference type="PANTHER" id="PTHR15431:SF21">
    <property type="entry name" value="CENTROSOMAL PROTEIN 20"/>
    <property type="match status" value="1"/>
</dbReference>
<dbReference type="PANTHER" id="PTHR15431">
    <property type="entry name" value="FGFR1 ONCOGENE PARTNER/LISH DOMAIN-CONTAINING PROTEIN"/>
    <property type="match status" value="1"/>
</dbReference>
<dbReference type="Pfam" id="PF09398">
    <property type="entry name" value="FOP_dimer"/>
    <property type="match status" value="1"/>
</dbReference>
<dbReference type="SMART" id="SM00667">
    <property type="entry name" value="LisH"/>
    <property type="match status" value="1"/>
</dbReference>
<dbReference type="PROSITE" id="PS50896">
    <property type="entry name" value="LISH"/>
    <property type="match status" value="1"/>
</dbReference>
<proteinExistence type="evidence at protein level"/>
<reference key="1">
    <citation type="journal article" date="2005" name="Science">
        <title>The transcriptional landscape of the mammalian genome.</title>
        <authorList>
            <person name="Carninci P."/>
            <person name="Kasukawa T."/>
            <person name="Katayama S."/>
            <person name="Gough J."/>
            <person name="Frith M.C."/>
            <person name="Maeda N."/>
            <person name="Oyama R."/>
            <person name="Ravasi T."/>
            <person name="Lenhard B."/>
            <person name="Wells C."/>
            <person name="Kodzius R."/>
            <person name="Shimokawa K."/>
            <person name="Bajic V.B."/>
            <person name="Brenner S.E."/>
            <person name="Batalov S."/>
            <person name="Forrest A.R."/>
            <person name="Zavolan M."/>
            <person name="Davis M.J."/>
            <person name="Wilming L.G."/>
            <person name="Aidinis V."/>
            <person name="Allen J.E."/>
            <person name="Ambesi-Impiombato A."/>
            <person name="Apweiler R."/>
            <person name="Aturaliya R.N."/>
            <person name="Bailey T.L."/>
            <person name="Bansal M."/>
            <person name="Baxter L."/>
            <person name="Beisel K.W."/>
            <person name="Bersano T."/>
            <person name="Bono H."/>
            <person name="Chalk A.M."/>
            <person name="Chiu K.P."/>
            <person name="Choudhary V."/>
            <person name="Christoffels A."/>
            <person name="Clutterbuck D.R."/>
            <person name="Crowe M.L."/>
            <person name="Dalla E."/>
            <person name="Dalrymple B.P."/>
            <person name="de Bono B."/>
            <person name="Della Gatta G."/>
            <person name="di Bernardo D."/>
            <person name="Down T."/>
            <person name="Engstrom P."/>
            <person name="Fagiolini M."/>
            <person name="Faulkner G."/>
            <person name="Fletcher C.F."/>
            <person name="Fukushima T."/>
            <person name="Furuno M."/>
            <person name="Futaki S."/>
            <person name="Gariboldi M."/>
            <person name="Georgii-Hemming P."/>
            <person name="Gingeras T.R."/>
            <person name="Gojobori T."/>
            <person name="Green R.E."/>
            <person name="Gustincich S."/>
            <person name="Harbers M."/>
            <person name="Hayashi Y."/>
            <person name="Hensch T.K."/>
            <person name="Hirokawa N."/>
            <person name="Hill D."/>
            <person name="Huminiecki L."/>
            <person name="Iacono M."/>
            <person name="Ikeo K."/>
            <person name="Iwama A."/>
            <person name="Ishikawa T."/>
            <person name="Jakt M."/>
            <person name="Kanapin A."/>
            <person name="Katoh M."/>
            <person name="Kawasawa Y."/>
            <person name="Kelso J."/>
            <person name="Kitamura H."/>
            <person name="Kitano H."/>
            <person name="Kollias G."/>
            <person name="Krishnan S.P."/>
            <person name="Kruger A."/>
            <person name="Kummerfeld S.K."/>
            <person name="Kurochkin I.V."/>
            <person name="Lareau L.F."/>
            <person name="Lazarevic D."/>
            <person name="Lipovich L."/>
            <person name="Liu J."/>
            <person name="Liuni S."/>
            <person name="McWilliam S."/>
            <person name="Madan Babu M."/>
            <person name="Madera M."/>
            <person name="Marchionni L."/>
            <person name="Matsuda H."/>
            <person name="Matsuzawa S."/>
            <person name="Miki H."/>
            <person name="Mignone F."/>
            <person name="Miyake S."/>
            <person name="Morris K."/>
            <person name="Mottagui-Tabar S."/>
            <person name="Mulder N."/>
            <person name="Nakano N."/>
            <person name="Nakauchi H."/>
            <person name="Ng P."/>
            <person name="Nilsson R."/>
            <person name="Nishiguchi S."/>
            <person name="Nishikawa S."/>
            <person name="Nori F."/>
            <person name="Ohara O."/>
            <person name="Okazaki Y."/>
            <person name="Orlando V."/>
            <person name="Pang K.C."/>
            <person name="Pavan W.J."/>
            <person name="Pavesi G."/>
            <person name="Pesole G."/>
            <person name="Petrovsky N."/>
            <person name="Piazza S."/>
            <person name="Reed J."/>
            <person name="Reid J.F."/>
            <person name="Ring B.Z."/>
            <person name="Ringwald M."/>
            <person name="Rost B."/>
            <person name="Ruan Y."/>
            <person name="Salzberg S.L."/>
            <person name="Sandelin A."/>
            <person name="Schneider C."/>
            <person name="Schoenbach C."/>
            <person name="Sekiguchi K."/>
            <person name="Semple C.A."/>
            <person name="Seno S."/>
            <person name="Sessa L."/>
            <person name="Sheng Y."/>
            <person name="Shibata Y."/>
            <person name="Shimada H."/>
            <person name="Shimada K."/>
            <person name="Silva D."/>
            <person name="Sinclair B."/>
            <person name="Sperling S."/>
            <person name="Stupka E."/>
            <person name="Sugiura K."/>
            <person name="Sultana R."/>
            <person name="Takenaka Y."/>
            <person name="Taki K."/>
            <person name="Tammoja K."/>
            <person name="Tan S.L."/>
            <person name="Tang S."/>
            <person name="Taylor M.S."/>
            <person name="Tegner J."/>
            <person name="Teichmann S.A."/>
            <person name="Ueda H.R."/>
            <person name="van Nimwegen E."/>
            <person name="Verardo R."/>
            <person name="Wei C.L."/>
            <person name="Yagi K."/>
            <person name="Yamanishi H."/>
            <person name="Zabarovsky E."/>
            <person name="Zhu S."/>
            <person name="Zimmer A."/>
            <person name="Hide W."/>
            <person name="Bult C."/>
            <person name="Grimmond S.M."/>
            <person name="Teasdale R.D."/>
            <person name="Liu E.T."/>
            <person name="Brusic V."/>
            <person name="Quackenbush J."/>
            <person name="Wahlestedt C."/>
            <person name="Mattick J.S."/>
            <person name="Hume D.A."/>
            <person name="Kai C."/>
            <person name="Sasaki D."/>
            <person name="Tomaru Y."/>
            <person name="Fukuda S."/>
            <person name="Kanamori-Katayama M."/>
            <person name="Suzuki M."/>
            <person name="Aoki J."/>
            <person name="Arakawa T."/>
            <person name="Iida J."/>
            <person name="Imamura K."/>
            <person name="Itoh M."/>
            <person name="Kato T."/>
            <person name="Kawaji H."/>
            <person name="Kawagashira N."/>
            <person name="Kawashima T."/>
            <person name="Kojima M."/>
            <person name="Kondo S."/>
            <person name="Konno H."/>
            <person name="Nakano K."/>
            <person name="Ninomiya N."/>
            <person name="Nishio T."/>
            <person name="Okada M."/>
            <person name="Plessy C."/>
            <person name="Shibata K."/>
            <person name="Shiraki T."/>
            <person name="Suzuki S."/>
            <person name="Tagami M."/>
            <person name="Waki K."/>
            <person name="Watahiki A."/>
            <person name="Okamura-Oho Y."/>
            <person name="Suzuki H."/>
            <person name="Kawai J."/>
            <person name="Hayashizaki Y."/>
        </authorList>
    </citation>
    <scope>NUCLEOTIDE SEQUENCE [LARGE SCALE MRNA]</scope>
    <source>
        <strain>C57BL/6J</strain>
        <strain>NOD</strain>
        <tissue>Stomach</tissue>
        <tissue>Thymus</tissue>
    </source>
</reference>
<reference key="2">
    <citation type="journal article" date="2004" name="Genome Res.">
        <title>The status, quality, and expansion of the NIH full-length cDNA project: the Mammalian Gene Collection (MGC).</title>
        <authorList>
            <consortium name="The MGC Project Team"/>
        </authorList>
    </citation>
    <scope>NUCLEOTIDE SEQUENCE [LARGE SCALE MRNA]</scope>
    <source>
        <strain>FVB/N</strain>
        <tissue>Mammary tumor</tissue>
    </source>
</reference>
<reference key="3">
    <citation type="journal article" date="2010" name="J. Cell Sci.">
        <title>Control of ciliogenesis by FOR20, a novel centrosome and pericentriolar satellite protein.</title>
        <authorList>
            <person name="Sedjai F."/>
            <person name="Acquaviva C."/>
            <person name="Chevrier V."/>
            <person name="Chauvin J.P."/>
            <person name="Coppin E."/>
            <person name="Aouane A."/>
            <person name="Coulier F."/>
            <person name="Tolun A."/>
            <person name="Pierres M."/>
            <person name="Birnbaum D."/>
            <person name="Rosnet O."/>
        </authorList>
    </citation>
    <scope>SUBCELLULAR LOCATION</scope>
</reference>
<reference key="4">
    <citation type="journal article" date="2016" name="Hum. Mol. Genet.">
        <title>OFIP/KIAA0753 forms a complex with OFD1 and FOR20 at pericentriolar satellites and centrosomes and is mutated in one individual with oral-facial-digital syndrome.</title>
        <authorList>
            <person name="Chevrier V."/>
            <person name="Bruel A.L."/>
            <person name="Van Dam T.J."/>
            <person name="Franco B."/>
            <person name="Lo Scalzo M."/>
            <person name="Lembo F."/>
            <person name="Audebert S."/>
            <person name="Baudelet E."/>
            <person name="Isnardon D."/>
            <person name="Bole A."/>
            <person name="Borg J.P."/>
            <person name="Kuentz P."/>
            <person name="Thevenon J."/>
            <person name="Burglen L."/>
            <person name="Faivre L."/>
            <person name="Riviere J.B."/>
            <person name="Huynen M.A."/>
            <person name="Birnbaum D."/>
            <person name="Rosnet O."/>
            <person name="Thauvin-Robinet C."/>
        </authorList>
    </citation>
    <scope>INTERACTION WITH KIAA0753 AND OFD1</scope>
</reference>
<name>CEP20_MOUSE</name>
<protein>
    <recommendedName>
        <fullName evidence="8">Centrosomal protein 20</fullName>
    </recommendedName>
    <alternativeName>
        <fullName>FGFR1OP N-terminal-like protein</fullName>
    </alternativeName>
    <alternativeName>
        <fullName>FOP-related protein of 20 kDa</fullName>
    </alternativeName>
    <alternativeName>
        <fullName>LisH domain-containing protein FOPNL</fullName>
    </alternativeName>
</protein>